<comment type="function">
    <text evidence="2 5">Component of the anaphase promoting complex/cyclosome (APC/C), a cell cycle-regulated E3 ubiquitin ligase that controls progression through mitosis and the G1 phase of the cell cycle (PubMed:21926987). The APC/C complex catalyzes assembly of branched 'Lys-11'-/'Lys-48'-linked branched ubiquitin chains on target proteins (PubMed:29033132). In the complex, plays a role in the release of the mitotic checkpoint complex (MCC) from the APC/C: not required for APC/C activity itself, but promotes the turnover of CDC20 and MCC on the APC/C, thereby participating in the responsiveness of the spindle assembly checkpoint (PubMed:21926987). Also required for degradation of CDC20 (PubMed:21926987).</text>
</comment>
<comment type="pathway">
    <text evidence="5">Protein modification; protein ubiquitination.</text>
</comment>
<comment type="subunit">
    <text evidence="2 3 4">The mammalian APC/C is composed at least of 14 distinct subunits ANAPC1, ANAPC2, CDC27/APC3, ANAPC4, ANAPC5, CDC16/APC6, ANAPC7, CDC23/APC8, ANAPC10, ANAPC11, CDC26/APC12, ANAPC13, ANAPC15 and ANAPC16 that assemble into a complex of at least 19 chains with a combined molecular mass of around 1.2 MDa; APC/C interacts with FZR1 and FBXO5.</text>
</comment>
<comment type="interaction">
    <interactant intactId="EBI-8787535">
        <id>P60006</id>
    </interactant>
    <interactant intactId="EBI-741885">
        <id>Q96LK0</id>
        <label>CEP19</label>
    </interactant>
    <organismsDiffer>false</organismsDiffer>
    <experiments>3</experiments>
</comment>
<comment type="alternative products">
    <event type="alternative splicing"/>
    <isoform>
        <id>P60006-1</id>
        <name>1</name>
        <sequence type="displayed"/>
    </isoform>
    <isoform>
        <id>P60006-2</id>
        <name>2</name>
        <sequence type="described" ref="VSP_055048"/>
    </isoform>
</comment>
<comment type="similarity">
    <text evidence="7">Belongs to the APC15 family.</text>
</comment>
<comment type="sequence caution" evidence="7">
    <conflict type="erroneous gene model prediction">
        <sequence resource="EMBL-CDS" id="EAW74842"/>
    </conflict>
</comment>
<keyword id="KW-0002">3D-structure</keyword>
<keyword id="KW-0025">Alternative splicing</keyword>
<keyword id="KW-0131">Cell cycle</keyword>
<keyword id="KW-0132">Cell division</keyword>
<keyword id="KW-0498">Mitosis</keyword>
<keyword id="KW-1267">Proteomics identification</keyword>
<keyword id="KW-1185">Reference proteome</keyword>
<gene>
    <name type="primary">ANAPC15</name>
    <name type="synonym">C11orf51</name>
    <name type="ORF">HSPC020</name>
</gene>
<protein>
    <recommendedName>
        <fullName>Anaphase-promoting complex subunit 15</fullName>
        <shortName>APC15</shortName>
    </recommendedName>
</protein>
<organism>
    <name type="scientific">Homo sapiens</name>
    <name type="common">Human</name>
    <dbReference type="NCBI Taxonomy" id="9606"/>
    <lineage>
        <taxon>Eukaryota</taxon>
        <taxon>Metazoa</taxon>
        <taxon>Chordata</taxon>
        <taxon>Craniata</taxon>
        <taxon>Vertebrata</taxon>
        <taxon>Euteleostomi</taxon>
        <taxon>Mammalia</taxon>
        <taxon>Eutheria</taxon>
        <taxon>Euarchontoglires</taxon>
        <taxon>Primates</taxon>
        <taxon>Haplorrhini</taxon>
        <taxon>Catarrhini</taxon>
        <taxon>Hominidae</taxon>
        <taxon>Homo</taxon>
    </lineage>
</organism>
<name>APC15_HUMAN</name>
<evidence type="ECO:0000256" key="1">
    <source>
        <dbReference type="SAM" id="MobiDB-lite"/>
    </source>
</evidence>
<evidence type="ECO:0000269" key="2">
    <source>
    </source>
</evidence>
<evidence type="ECO:0000269" key="3">
    <source>
    </source>
</evidence>
<evidence type="ECO:0000269" key="4">
    <source>
    </source>
</evidence>
<evidence type="ECO:0000269" key="5">
    <source>
    </source>
</evidence>
<evidence type="ECO:0000303" key="6">
    <source>
    </source>
</evidence>
<evidence type="ECO:0000305" key="7"/>
<evidence type="ECO:0007744" key="8">
    <source>
        <dbReference type="PDB" id="4UI9"/>
    </source>
</evidence>
<evidence type="ECO:0007744" key="9">
    <source>
        <dbReference type="PDB" id="5A31"/>
    </source>
</evidence>
<evidence type="ECO:0007829" key="10">
    <source>
        <dbReference type="PDB" id="9GAW"/>
    </source>
</evidence>
<accession>P60006</accession>
<accession>G3V1Q3</accession>
<accession>Q9CXK2</accession>
<accession>Q9Y269</accession>
<dbReference type="EMBL" id="AF077206">
    <property type="protein sequence ID" value="AAD27001.1"/>
    <property type="molecule type" value="mRNA"/>
</dbReference>
<dbReference type="EMBL" id="AL080071">
    <property type="protein sequence ID" value="CAB45698.1"/>
    <property type="molecule type" value="mRNA"/>
</dbReference>
<dbReference type="EMBL" id="AK222622">
    <property type="status" value="NOT_ANNOTATED_CDS"/>
    <property type="molecule type" value="mRNA"/>
</dbReference>
<dbReference type="EMBL" id="AP000812">
    <property type="status" value="NOT_ANNOTATED_CDS"/>
    <property type="molecule type" value="Genomic_DNA"/>
</dbReference>
<dbReference type="EMBL" id="CH471076">
    <property type="protein sequence ID" value="EAW74842.1"/>
    <property type="status" value="ALT_SEQ"/>
    <property type="molecule type" value="Genomic_DNA"/>
</dbReference>
<dbReference type="EMBL" id="BC005156">
    <property type="protein sequence ID" value="AAH05156.1"/>
    <property type="molecule type" value="mRNA"/>
</dbReference>
<dbReference type="EMBL" id="BC005393">
    <property type="protein sequence ID" value="AAH05393.1"/>
    <property type="molecule type" value="mRNA"/>
</dbReference>
<dbReference type="CCDS" id="CCDS60880.1">
    <molecule id="P60006-2"/>
</dbReference>
<dbReference type="CCDS" id="CCDS8210.1">
    <molecule id="P60006-1"/>
</dbReference>
<dbReference type="PIR" id="T12467">
    <property type="entry name" value="T12467"/>
</dbReference>
<dbReference type="RefSeq" id="NP_001265414.1">
    <molecule id="P60006-2"/>
    <property type="nucleotide sequence ID" value="NM_001278485.2"/>
</dbReference>
<dbReference type="RefSeq" id="NP_001265415.1">
    <molecule id="P60006-2"/>
    <property type="nucleotide sequence ID" value="NM_001278486.2"/>
</dbReference>
<dbReference type="RefSeq" id="NP_001265416.1">
    <molecule id="P60006-1"/>
    <property type="nucleotide sequence ID" value="NM_001278487.2"/>
</dbReference>
<dbReference type="RefSeq" id="NP_001265417.1">
    <molecule id="P60006-1"/>
    <property type="nucleotide sequence ID" value="NM_001278488.2"/>
</dbReference>
<dbReference type="RefSeq" id="NP_001265418.1">
    <molecule id="P60006-1"/>
    <property type="nucleotide sequence ID" value="NM_001278489.2"/>
</dbReference>
<dbReference type="RefSeq" id="NP_001265419.1">
    <molecule id="P60006-1"/>
    <property type="nucleotide sequence ID" value="NM_001278490.2"/>
</dbReference>
<dbReference type="RefSeq" id="NP_001265420.1">
    <molecule id="P60006-1"/>
    <property type="nucleotide sequence ID" value="NM_001278491.1"/>
</dbReference>
<dbReference type="RefSeq" id="NP_001265421.1">
    <molecule id="P60006-1"/>
    <property type="nucleotide sequence ID" value="NM_001278492.2"/>
</dbReference>
<dbReference type="RefSeq" id="NP_001265422.1">
    <molecule id="P60006-1"/>
    <property type="nucleotide sequence ID" value="NM_001278493.2"/>
</dbReference>
<dbReference type="RefSeq" id="NP_001265423.1">
    <molecule id="P60006-1"/>
    <property type="nucleotide sequence ID" value="NM_001278494.2"/>
</dbReference>
<dbReference type="RefSeq" id="NP_001380366.1">
    <molecule id="P60006-2"/>
    <property type="nucleotide sequence ID" value="NM_001393437.1"/>
</dbReference>
<dbReference type="RefSeq" id="NP_001380367.1">
    <molecule id="P60006-2"/>
    <property type="nucleotide sequence ID" value="NM_001393438.1"/>
</dbReference>
<dbReference type="RefSeq" id="NP_001380368.1">
    <molecule id="P60006-2"/>
    <property type="nucleotide sequence ID" value="NM_001393439.1"/>
</dbReference>
<dbReference type="RefSeq" id="NP_001380369.1">
    <molecule id="P60006-2"/>
    <property type="nucleotide sequence ID" value="NM_001393440.1"/>
</dbReference>
<dbReference type="RefSeq" id="NP_001380370.1">
    <molecule id="P60006-2"/>
    <property type="nucleotide sequence ID" value="NM_001393441.1"/>
</dbReference>
<dbReference type="RefSeq" id="NP_001380371.1">
    <molecule id="P60006-2"/>
    <property type="nucleotide sequence ID" value="NM_001393442.1"/>
</dbReference>
<dbReference type="RefSeq" id="NP_001380375.1">
    <molecule id="P60006-1"/>
    <property type="nucleotide sequence ID" value="NM_001393446.1"/>
</dbReference>
<dbReference type="RefSeq" id="NP_001380376.1">
    <molecule id="P60006-1"/>
    <property type="nucleotide sequence ID" value="NM_001393447.1"/>
</dbReference>
<dbReference type="RefSeq" id="NP_001380377.1">
    <molecule id="P60006-1"/>
    <property type="nucleotide sequence ID" value="NM_001393448.1"/>
</dbReference>
<dbReference type="RefSeq" id="NP_001380378.1">
    <molecule id="P60006-1"/>
    <property type="nucleotide sequence ID" value="NM_001393449.1"/>
</dbReference>
<dbReference type="RefSeq" id="NP_001380379.1">
    <molecule id="P60006-1"/>
    <property type="nucleotide sequence ID" value="NM_001393450.1"/>
</dbReference>
<dbReference type="RefSeq" id="NP_001380380.1">
    <molecule id="P60006-1"/>
    <property type="nucleotide sequence ID" value="NM_001393451.1"/>
</dbReference>
<dbReference type="RefSeq" id="NP_001380381.1">
    <molecule id="P60006-1"/>
    <property type="nucleotide sequence ID" value="NM_001393452.1"/>
</dbReference>
<dbReference type="RefSeq" id="NP_001380382.1">
    <molecule id="P60006-1"/>
    <property type="nucleotide sequence ID" value="NM_001393453.1"/>
</dbReference>
<dbReference type="RefSeq" id="NP_001380383.1">
    <molecule id="P60006-1"/>
    <property type="nucleotide sequence ID" value="NM_001393454.1"/>
</dbReference>
<dbReference type="RefSeq" id="NP_001380384.1">
    <molecule id="P60006-1"/>
    <property type="nucleotide sequence ID" value="NM_001393455.1"/>
</dbReference>
<dbReference type="RefSeq" id="NP_001380385.1">
    <molecule id="P60006-1"/>
    <property type="nucleotide sequence ID" value="NM_001393456.1"/>
</dbReference>
<dbReference type="RefSeq" id="NP_001380386.1">
    <molecule id="P60006-1"/>
    <property type="nucleotide sequence ID" value="NM_001393457.1"/>
</dbReference>
<dbReference type="RefSeq" id="NP_001380387.1">
    <molecule id="P60006-1"/>
    <property type="nucleotide sequence ID" value="NM_001393458.1"/>
</dbReference>
<dbReference type="RefSeq" id="NP_054761.1">
    <molecule id="P60006-1"/>
    <property type="nucleotide sequence ID" value="NM_014042.3"/>
</dbReference>
<dbReference type="RefSeq" id="XP_016872985.1">
    <property type="nucleotide sequence ID" value="XM_017017496.1"/>
</dbReference>
<dbReference type="RefSeq" id="XP_016872986.1">
    <property type="nucleotide sequence ID" value="XM_017017497.1"/>
</dbReference>
<dbReference type="RefSeq" id="XP_047282679.1">
    <molecule id="P60006-2"/>
    <property type="nucleotide sequence ID" value="XM_047426723.1"/>
</dbReference>
<dbReference type="RefSeq" id="XP_054224323.1">
    <molecule id="P60006-2"/>
    <property type="nucleotide sequence ID" value="XM_054368348.1"/>
</dbReference>
<dbReference type="PDB" id="4UI9">
    <property type="method" value="EM"/>
    <property type="resolution" value="3.60 A"/>
    <property type="chains" value="D=1-121"/>
</dbReference>
<dbReference type="PDB" id="5A31">
    <property type="method" value="EM"/>
    <property type="resolution" value="4.30 A"/>
    <property type="chains" value="D=6-121"/>
</dbReference>
<dbReference type="PDB" id="5G04">
    <property type="method" value="EM"/>
    <property type="resolution" value="4.00 A"/>
    <property type="chains" value="D=1-121"/>
</dbReference>
<dbReference type="PDB" id="5G05">
    <property type="method" value="EM"/>
    <property type="resolution" value="3.40 A"/>
    <property type="chains" value="D=1-121"/>
</dbReference>
<dbReference type="PDB" id="5L9T">
    <property type="method" value="EM"/>
    <property type="resolution" value="6.40 A"/>
    <property type="chains" value="D=1-121"/>
</dbReference>
<dbReference type="PDB" id="5L9U">
    <property type="method" value="EM"/>
    <property type="resolution" value="6.40 A"/>
    <property type="chains" value="D=1-121"/>
</dbReference>
<dbReference type="PDB" id="5LCW">
    <property type="method" value="EM"/>
    <property type="resolution" value="4.00 A"/>
    <property type="chains" value="D=1-121"/>
</dbReference>
<dbReference type="PDB" id="6Q6G">
    <property type="method" value="EM"/>
    <property type="resolution" value="3.20 A"/>
    <property type="chains" value="D=1-121"/>
</dbReference>
<dbReference type="PDB" id="6Q6H">
    <property type="method" value="EM"/>
    <property type="resolution" value="3.20 A"/>
    <property type="chains" value="D=1-121"/>
</dbReference>
<dbReference type="PDB" id="6TLJ">
    <property type="method" value="EM"/>
    <property type="resolution" value="3.80 A"/>
    <property type="chains" value="D=1-121"/>
</dbReference>
<dbReference type="PDB" id="6TM5">
    <property type="method" value="EM"/>
    <property type="resolution" value="3.90 A"/>
    <property type="chains" value="D=1-121"/>
</dbReference>
<dbReference type="PDB" id="6TNT">
    <property type="method" value="EM"/>
    <property type="resolution" value="3.78 A"/>
    <property type="chains" value="D=1-121"/>
</dbReference>
<dbReference type="PDB" id="8PKP">
    <property type="method" value="EM"/>
    <property type="resolution" value="3.20 A"/>
    <property type="chains" value="D=1-121"/>
</dbReference>
<dbReference type="PDB" id="8TAR">
    <property type="method" value="EM"/>
    <property type="resolution" value="4.00 A"/>
    <property type="chains" value="D=2-57"/>
</dbReference>
<dbReference type="PDB" id="8TAU">
    <property type="method" value="EM"/>
    <property type="resolution" value="3.50 A"/>
    <property type="chains" value="D=2-57"/>
</dbReference>
<dbReference type="PDB" id="9GAW">
    <property type="method" value="EM"/>
    <property type="resolution" value="2.90 A"/>
    <property type="chains" value="D=1-121"/>
</dbReference>
<dbReference type="PDBsum" id="4UI9"/>
<dbReference type="PDBsum" id="5A31"/>
<dbReference type="PDBsum" id="5G04"/>
<dbReference type="PDBsum" id="5G05"/>
<dbReference type="PDBsum" id="5L9T"/>
<dbReference type="PDBsum" id="5L9U"/>
<dbReference type="PDBsum" id="5LCW"/>
<dbReference type="PDBsum" id="6Q6G"/>
<dbReference type="PDBsum" id="6Q6H"/>
<dbReference type="PDBsum" id="6TLJ"/>
<dbReference type="PDBsum" id="6TM5"/>
<dbReference type="PDBsum" id="6TNT"/>
<dbReference type="PDBsum" id="8PKP"/>
<dbReference type="PDBsum" id="8TAR"/>
<dbReference type="PDBsum" id="8TAU"/>
<dbReference type="PDBsum" id="9GAW"/>
<dbReference type="EMDB" id="EMD-10516"/>
<dbReference type="EMDB" id="EMD-10518"/>
<dbReference type="EMDB" id="EMD-10536"/>
<dbReference type="EMDB" id="EMD-13931"/>
<dbReference type="EMDB" id="EMD-17751"/>
<dbReference type="EMDB" id="EMD-19711"/>
<dbReference type="EMDB" id="EMD-2924"/>
<dbReference type="EMDB" id="EMD-2925"/>
<dbReference type="EMDB" id="EMD-3385"/>
<dbReference type="EMDB" id="EMD-3386"/>
<dbReference type="EMDB" id="EMD-3387"/>
<dbReference type="EMDB" id="EMD-3388"/>
<dbReference type="EMDB" id="EMD-3389"/>
<dbReference type="EMDB" id="EMD-3390"/>
<dbReference type="EMDB" id="EMD-4037"/>
<dbReference type="EMDB" id="EMD-41140"/>
<dbReference type="EMDB" id="EMD-41142"/>
<dbReference type="EMDB" id="EMD-4465"/>
<dbReference type="EMDB" id="EMD-4466"/>
<dbReference type="EMDB" id="EMD-4467"/>
<dbReference type="EMDB" id="EMD-51190"/>
<dbReference type="SMR" id="P60006"/>
<dbReference type="BioGRID" id="117412">
    <property type="interactions" value="133"/>
</dbReference>
<dbReference type="ComplexPortal" id="CPX-1860">
    <property type="entry name" value="Anaphase-promoting core complex"/>
</dbReference>
<dbReference type="DIP" id="DIP-61021N"/>
<dbReference type="FunCoup" id="P60006">
    <property type="interactions" value="2012"/>
</dbReference>
<dbReference type="IntAct" id="P60006">
    <property type="interactions" value="127"/>
</dbReference>
<dbReference type="STRING" id="9606.ENSP00000437360"/>
<dbReference type="BioMuta" id="ANAPC15"/>
<dbReference type="DMDM" id="38372627"/>
<dbReference type="jPOST" id="P60006"/>
<dbReference type="MassIVE" id="P60006"/>
<dbReference type="PaxDb" id="9606-ENSP00000439403"/>
<dbReference type="PeptideAtlas" id="P60006"/>
<dbReference type="ProteomicsDB" id="57178">
    <molecule id="P60006-1"/>
</dbReference>
<dbReference type="Pumba" id="P60006"/>
<dbReference type="Antibodypedia" id="44861">
    <property type="antibodies" value="39 antibodies from 17 providers"/>
</dbReference>
<dbReference type="DNASU" id="25906"/>
<dbReference type="Ensembl" id="ENST00000227618.9">
    <molecule id="P60006-1"/>
    <property type="protein sequence ID" value="ENSP00000227618.4"/>
    <property type="gene ID" value="ENSG00000110200.9"/>
</dbReference>
<dbReference type="Ensembl" id="ENST00000535234.5">
    <molecule id="P60006-1"/>
    <property type="protein sequence ID" value="ENSP00000446412.1"/>
    <property type="gene ID" value="ENSG00000110200.9"/>
</dbReference>
<dbReference type="Ensembl" id="ENST00000535503.5">
    <molecule id="P60006-1"/>
    <property type="protein sequence ID" value="ENSP00000443383.1"/>
    <property type="gene ID" value="ENSG00000110200.9"/>
</dbReference>
<dbReference type="Ensembl" id="ENST00000538393.5">
    <molecule id="P60006-1"/>
    <property type="protein sequence ID" value="ENSP00000440002.1"/>
    <property type="gene ID" value="ENSG00000110200.9"/>
</dbReference>
<dbReference type="Ensembl" id="ENST00000538919.5">
    <molecule id="P60006-1"/>
    <property type="protein sequence ID" value="ENSP00000440983.1"/>
    <property type="gene ID" value="ENSG00000110200.9"/>
</dbReference>
<dbReference type="Ensembl" id="ENST00000542531.5">
    <molecule id="P60006-1"/>
    <property type="protein sequence ID" value="ENSP00000443911.1"/>
    <property type="gene ID" value="ENSG00000110200.9"/>
</dbReference>
<dbReference type="Ensembl" id="ENST00000543587.5">
    <molecule id="P60006-2"/>
    <property type="protein sequence ID" value="ENSP00000439403.1"/>
    <property type="gene ID" value="ENSG00000110200.9"/>
</dbReference>
<dbReference type="Ensembl" id="ENST00000545680.5">
    <molecule id="P60006-2"/>
    <property type="protein sequence ID" value="ENSP00000443645.1"/>
    <property type="gene ID" value="ENSG00000110200.9"/>
</dbReference>
<dbReference type="Ensembl" id="ENST00000545944.5">
    <molecule id="P60006-1"/>
    <property type="protein sequence ID" value="ENSP00000446383.1"/>
    <property type="gene ID" value="ENSG00000110200.9"/>
</dbReference>
<dbReference type="GeneID" id="25906"/>
<dbReference type="KEGG" id="hsa:25906"/>
<dbReference type="MANE-Select" id="ENST00000227618.9">
    <property type="protein sequence ID" value="ENSP00000227618.4"/>
    <property type="RefSeq nucleotide sequence ID" value="NM_014042.3"/>
    <property type="RefSeq protein sequence ID" value="NP_054761.1"/>
</dbReference>
<dbReference type="UCSC" id="uc001orv.5">
    <molecule id="P60006-1"/>
    <property type="organism name" value="human"/>
</dbReference>
<dbReference type="AGR" id="HGNC:24531"/>
<dbReference type="CTD" id="25906"/>
<dbReference type="DisGeNET" id="25906"/>
<dbReference type="GeneCards" id="ANAPC15"/>
<dbReference type="HGNC" id="HGNC:24531">
    <property type="gene designation" value="ANAPC15"/>
</dbReference>
<dbReference type="HPA" id="ENSG00000110200">
    <property type="expression patterns" value="Low tissue specificity"/>
</dbReference>
<dbReference type="MalaCards" id="ANAPC15"/>
<dbReference type="MIM" id="614717">
    <property type="type" value="gene"/>
</dbReference>
<dbReference type="neXtProt" id="NX_P60006"/>
<dbReference type="OpenTargets" id="ENSG00000110200"/>
<dbReference type="PharmGKB" id="PA143485346"/>
<dbReference type="VEuPathDB" id="HostDB:ENSG00000110200"/>
<dbReference type="eggNOG" id="ENOG502RZUK">
    <property type="taxonomic scope" value="Eukaryota"/>
</dbReference>
<dbReference type="GeneTree" id="ENSGT00390000000938"/>
<dbReference type="HOGENOM" id="CLU_142923_0_0_1"/>
<dbReference type="InParanoid" id="P60006"/>
<dbReference type="OMA" id="EGTDQDQ"/>
<dbReference type="OrthoDB" id="6362917at2759"/>
<dbReference type="PAN-GO" id="P60006">
    <property type="GO annotations" value="2 GO annotations based on evolutionary models"/>
</dbReference>
<dbReference type="PhylomeDB" id="P60006"/>
<dbReference type="PathwayCommons" id="P60006"/>
<dbReference type="Reactome" id="R-HSA-141430">
    <property type="pathway name" value="Inactivation of APC/C via direct inhibition of the APC/C complex"/>
</dbReference>
<dbReference type="Reactome" id="R-HSA-174048">
    <property type="pathway name" value="APC/C:Cdc20 mediated degradation of Cyclin B"/>
</dbReference>
<dbReference type="Reactome" id="R-HSA-174084">
    <property type="pathway name" value="Autodegradation of Cdh1 by Cdh1:APC/C"/>
</dbReference>
<dbReference type="Reactome" id="R-HSA-174154">
    <property type="pathway name" value="APC/C:Cdc20 mediated degradation of Securin"/>
</dbReference>
<dbReference type="Reactome" id="R-HSA-174178">
    <property type="pathway name" value="APC/C:Cdh1 mediated degradation of Cdc20 and other APC/C:Cdh1 targeted proteins in late mitosis/early G1"/>
</dbReference>
<dbReference type="Reactome" id="R-HSA-174184">
    <property type="pathway name" value="Cdc20:Phospho-APC/C mediated degradation of Cyclin A"/>
</dbReference>
<dbReference type="Reactome" id="R-HSA-176407">
    <property type="pathway name" value="Conversion from APC/C:Cdc20 to APC/C:Cdh1 in late anaphase"/>
</dbReference>
<dbReference type="Reactome" id="R-HSA-176408">
    <property type="pathway name" value="Regulation of APC/C activators between G1/S and early anaphase"/>
</dbReference>
<dbReference type="Reactome" id="R-HSA-176409">
    <property type="pathway name" value="APC/C:Cdc20 mediated degradation of mitotic proteins"/>
</dbReference>
<dbReference type="Reactome" id="R-HSA-176412">
    <property type="pathway name" value="Phosphorylation of the APC/C"/>
</dbReference>
<dbReference type="Reactome" id="R-HSA-179409">
    <property type="pathway name" value="APC-Cdc20 mediated degradation of Nek2A"/>
</dbReference>
<dbReference type="Reactome" id="R-HSA-2467813">
    <property type="pathway name" value="Separation of Sister Chromatids"/>
</dbReference>
<dbReference type="Reactome" id="R-HSA-2559582">
    <property type="pathway name" value="Senescence-Associated Secretory Phenotype (SASP)"/>
</dbReference>
<dbReference type="Reactome" id="R-HSA-68867">
    <property type="pathway name" value="Assembly of the pre-replicative complex"/>
</dbReference>
<dbReference type="Reactome" id="R-HSA-69017">
    <property type="pathway name" value="CDK-mediated phosphorylation and removal of Cdc6"/>
</dbReference>
<dbReference type="Reactome" id="R-HSA-8853884">
    <property type="pathway name" value="Transcriptional Regulation by VENTX"/>
</dbReference>
<dbReference type="Reactome" id="R-HSA-9687136">
    <property type="pathway name" value="Aberrant regulation of mitotic exit in cancer due to RB1 defects"/>
</dbReference>
<dbReference type="SignaLink" id="P60006"/>
<dbReference type="UniPathway" id="UPA00143"/>
<dbReference type="BioGRID-ORCS" id="25906">
    <property type="hits" value="422 hits in 1160 CRISPR screens"/>
</dbReference>
<dbReference type="ChiTaRS" id="ANAPC15">
    <property type="organism name" value="human"/>
</dbReference>
<dbReference type="EvolutionaryTrace" id="P60006"/>
<dbReference type="GenomeRNAi" id="25906"/>
<dbReference type="Pharos" id="P60006">
    <property type="development level" value="Tdark"/>
</dbReference>
<dbReference type="PRO" id="PR:P60006"/>
<dbReference type="Proteomes" id="UP000005640">
    <property type="component" value="Chromosome 11"/>
</dbReference>
<dbReference type="RNAct" id="P60006">
    <property type="molecule type" value="protein"/>
</dbReference>
<dbReference type="Bgee" id="ENSG00000110200">
    <property type="expression patterns" value="Expressed in apex of heart and 195 other cell types or tissues"/>
</dbReference>
<dbReference type="ExpressionAtlas" id="P60006">
    <property type="expression patterns" value="baseline and differential"/>
</dbReference>
<dbReference type="GO" id="GO:0005680">
    <property type="term" value="C:anaphase-promoting complex"/>
    <property type="evidence" value="ECO:0000314"/>
    <property type="project" value="UniProtKB"/>
</dbReference>
<dbReference type="GO" id="GO:0005829">
    <property type="term" value="C:cytosol"/>
    <property type="evidence" value="ECO:0000304"/>
    <property type="project" value="Reactome"/>
</dbReference>
<dbReference type="GO" id="GO:0005654">
    <property type="term" value="C:nucleoplasm"/>
    <property type="evidence" value="ECO:0000304"/>
    <property type="project" value="Reactome"/>
</dbReference>
<dbReference type="GO" id="GO:0031145">
    <property type="term" value="P:anaphase-promoting complex-dependent catabolic process"/>
    <property type="evidence" value="ECO:0000314"/>
    <property type="project" value="UniProtKB"/>
</dbReference>
<dbReference type="GO" id="GO:0051301">
    <property type="term" value="P:cell division"/>
    <property type="evidence" value="ECO:0007669"/>
    <property type="project" value="UniProtKB-KW"/>
</dbReference>
<dbReference type="GO" id="GO:0141198">
    <property type="term" value="P:protein branched polyubiquitination"/>
    <property type="evidence" value="ECO:0000314"/>
    <property type="project" value="UniProtKB"/>
</dbReference>
<dbReference type="GO" id="GO:0070979">
    <property type="term" value="P:protein K11-linked ubiquitination"/>
    <property type="evidence" value="ECO:0000314"/>
    <property type="project" value="UniProtKB"/>
</dbReference>
<dbReference type="GO" id="GO:0070936">
    <property type="term" value="P:protein K48-linked ubiquitination"/>
    <property type="evidence" value="ECO:0000314"/>
    <property type="project" value="UniProtKB"/>
</dbReference>
<dbReference type="GO" id="GO:0051445">
    <property type="term" value="P:regulation of meiotic cell cycle"/>
    <property type="evidence" value="ECO:0000303"/>
    <property type="project" value="ComplexPortal"/>
</dbReference>
<dbReference type="GO" id="GO:0007346">
    <property type="term" value="P:regulation of mitotic cell cycle"/>
    <property type="evidence" value="ECO:0000303"/>
    <property type="project" value="ComplexPortal"/>
</dbReference>
<dbReference type="GO" id="GO:0090266">
    <property type="term" value="P:regulation of mitotic cell cycle spindle assembly checkpoint"/>
    <property type="evidence" value="ECO:0000315"/>
    <property type="project" value="UniProtKB"/>
</dbReference>
<dbReference type="DisProt" id="DP01454"/>
<dbReference type="InterPro" id="IPR026182">
    <property type="entry name" value="ANAPC15"/>
</dbReference>
<dbReference type="PANTHER" id="PTHR22526">
    <property type="entry name" value="ANAPHASE PROMOTING COMPLEX C SUBUNIT 15, PSEUDOGENE-RELATED"/>
    <property type="match status" value="1"/>
</dbReference>
<dbReference type="PANTHER" id="PTHR22526:SF2">
    <property type="entry name" value="ANAPHASE PROMOTING COMPLEX C SUBUNIT 15, PSEUDOGENE-RELATED"/>
    <property type="match status" value="1"/>
</dbReference>
<dbReference type="Pfam" id="PF15243">
    <property type="entry name" value="ANAPC15"/>
    <property type="match status" value="1"/>
</dbReference>
<proteinExistence type="evidence at protein level"/>
<feature type="chain" id="PRO_0000084072" description="Anaphase-promoting complex subunit 15">
    <location>
        <begin position="1"/>
        <end position="121"/>
    </location>
</feature>
<feature type="region of interest" description="Disordered" evidence="1">
    <location>
        <begin position="46"/>
        <end position="121"/>
    </location>
</feature>
<feature type="compositionally biased region" description="Acidic residues" evidence="1">
    <location>
        <begin position="62"/>
        <end position="121"/>
    </location>
</feature>
<feature type="splice variant" id="VSP_055048" description="In isoform 2." evidence="6">
    <original>E</original>
    <variation>EPPLQ</variation>
    <location>
        <position position="106"/>
    </location>
</feature>
<feature type="sequence conflict" description="In Ref. 3; AK222622." evidence="7" ref="3">
    <original>D</original>
    <variation>G</variation>
    <location>
        <position position="73"/>
    </location>
</feature>
<feature type="turn" evidence="10">
    <location>
        <begin position="15"/>
        <end position="17"/>
    </location>
</feature>
<feature type="helix" evidence="10">
    <location>
        <begin position="28"/>
        <end position="45"/>
    </location>
</feature>
<feature type="turn" evidence="10">
    <location>
        <begin position="46"/>
        <end position="48"/>
    </location>
</feature>
<feature type="strand" evidence="10">
    <location>
        <begin position="49"/>
        <end position="51"/>
    </location>
</feature>
<sequence>MSTLFPSLFPRVTETLWFNLDRPCVEETELQQQEQQHQAWLQSIAEKDNNLVPIGKPASEHYDDEEEEDDEDDEDSEEDSEDDEDMQDMDEMNDYNESPDDGEVNEVDMEGNEQDQDQWMI</sequence>
<reference key="1">
    <citation type="journal article" date="2000" name="Genome Res.">
        <title>Cloning and functional analysis of cDNAs with open reading frames for 300 previously undefined genes expressed in CD34+ hematopoietic stem/progenitor cells.</title>
        <authorList>
            <person name="Zhang Q.-H."/>
            <person name="Ye M."/>
            <person name="Wu X.-Y."/>
            <person name="Ren S.-X."/>
            <person name="Zhao M."/>
            <person name="Zhao C.-J."/>
            <person name="Fu G."/>
            <person name="Shen Y."/>
            <person name="Fan H.-Y."/>
            <person name="Lu G."/>
            <person name="Zhong M."/>
            <person name="Xu X.-R."/>
            <person name="Han Z.-G."/>
            <person name="Zhang J.-W."/>
            <person name="Tao J."/>
            <person name="Huang Q.-H."/>
            <person name="Zhou J."/>
            <person name="Hu G.-X."/>
            <person name="Gu J."/>
            <person name="Chen S.-J."/>
            <person name="Chen Z."/>
        </authorList>
    </citation>
    <scope>NUCLEOTIDE SEQUENCE [LARGE SCALE MRNA] (ISOFORM 1)</scope>
    <source>
        <tissue>Umbilical cord blood</tissue>
    </source>
</reference>
<reference key="2">
    <citation type="journal article" date="2001" name="Genome Res.">
        <title>Towards a catalog of human genes and proteins: sequencing and analysis of 500 novel complete protein coding human cDNAs.</title>
        <authorList>
            <person name="Wiemann S."/>
            <person name="Weil B."/>
            <person name="Wellenreuther R."/>
            <person name="Gassenhuber J."/>
            <person name="Glassl S."/>
            <person name="Ansorge W."/>
            <person name="Boecher M."/>
            <person name="Bloecker H."/>
            <person name="Bauersachs S."/>
            <person name="Blum H."/>
            <person name="Lauber J."/>
            <person name="Duesterhoeft A."/>
            <person name="Beyer A."/>
            <person name="Koehrer K."/>
            <person name="Strack N."/>
            <person name="Mewes H.-W."/>
            <person name="Ottenwaelder B."/>
            <person name="Obermaier B."/>
            <person name="Tampe J."/>
            <person name="Heubner D."/>
            <person name="Wambutt R."/>
            <person name="Korn B."/>
            <person name="Klein M."/>
            <person name="Poustka A."/>
        </authorList>
    </citation>
    <scope>NUCLEOTIDE SEQUENCE [LARGE SCALE MRNA] (ISOFORM 1)</scope>
    <source>
        <tissue>Brain</tissue>
    </source>
</reference>
<reference key="3">
    <citation type="journal article" date="2004" name="Nat. Genet.">
        <title>Complete sequencing and characterization of 21,243 full-length human cDNAs.</title>
        <authorList>
            <person name="Ota T."/>
            <person name="Suzuki Y."/>
            <person name="Nishikawa T."/>
            <person name="Otsuki T."/>
            <person name="Sugiyama T."/>
            <person name="Irie R."/>
            <person name="Wakamatsu A."/>
            <person name="Hayashi K."/>
            <person name="Sato H."/>
            <person name="Nagai K."/>
            <person name="Kimura K."/>
            <person name="Makita H."/>
            <person name="Sekine M."/>
            <person name="Obayashi M."/>
            <person name="Nishi T."/>
            <person name="Shibahara T."/>
            <person name="Tanaka T."/>
            <person name="Ishii S."/>
            <person name="Yamamoto J."/>
            <person name="Saito K."/>
            <person name="Kawai Y."/>
            <person name="Isono Y."/>
            <person name="Nakamura Y."/>
            <person name="Nagahari K."/>
            <person name="Murakami K."/>
            <person name="Yasuda T."/>
            <person name="Iwayanagi T."/>
            <person name="Wagatsuma M."/>
            <person name="Shiratori A."/>
            <person name="Sudo H."/>
            <person name="Hosoiri T."/>
            <person name="Kaku Y."/>
            <person name="Kodaira H."/>
            <person name="Kondo H."/>
            <person name="Sugawara M."/>
            <person name="Takahashi M."/>
            <person name="Kanda K."/>
            <person name="Yokoi T."/>
            <person name="Furuya T."/>
            <person name="Kikkawa E."/>
            <person name="Omura Y."/>
            <person name="Abe K."/>
            <person name="Kamihara K."/>
            <person name="Katsuta N."/>
            <person name="Sato K."/>
            <person name="Tanikawa M."/>
            <person name="Yamazaki M."/>
            <person name="Ninomiya K."/>
            <person name="Ishibashi T."/>
            <person name="Yamashita H."/>
            <person name="Murakawa K."/>
            <person name="Fujimori K."/>
            <person name="Tanai H."/>
            <person name="Kimata M."/>
            <person name="Watanabe M."/>
            <person name="Hiraoka S."/>
            <person name="Chiba Y."/>
            <person name="Ishida S."/>
            <person name="Ono Y."/>
            <person name="Takiguchi S."/>
            <person name="Watanabe S."/>
            <person name="Yosida M."/>
            <person name="Hotuta T."/>
            <person name="Kusano J."/>
            <person name="Kanehori K."/>
            <person name="Takahashi-Fujii A."/>
            <person name="Hara H."/>
            <person name="Tanase T.-O."/>
            <person name="Nomura Y."/>
            <person name="Togiya S."/>
            <person name="Komai F."/>
            <person name="Hara R."/>
            <person name="Takeuchi K."/>
            <person name="Arita M."/>
            <person name="Imose N."/>
            <person name="Musashino K."/>
            <person name="Yuuki H."/>
            <person name="Oshima A."/>
            <person name="Sasaki N."/>
            <person name="Aotsuka S."/>
            <person name="Yoshikawa Y."/>
            <person name="Matsunawa H."/>
            <person name="Ichihara T."/>
            <person name="Shiohata N."/>
            <person name="Sano S."/>
            <person name="Moriya S."/>
            <person name="Momiyama H."/>
            <person name="Satoh N."/>
            <person name="Takami S."/>
            <person name="Terashima Y."/>
            <person name="Suzuki O."/>
            <person name="Nakagawa S."/>
            <person name="Senoh A."/>
            <person name="Mizoguchi H."/>
            <person name="Goto Y."/>
            <person name="Shimizu F."/>
            <person name="Wakebe H."/>
            <person name="Hishigaki H."/>
            <person name="Watanabe T."/>
            <person name="Sugiyama A."/>
            <person name="Takemoto M."/>
            <person name="Kawakami B."/>
            <person name="Yamazaki M."/>
            <person name="Watanabe K."/>
            <person name="Kumagai A."/>
            <person name="Itakura S."/>
            <person name="Fukuzumi Y."/>
            <person name="Fujimori Y."/>
            <person name="Komiyama M."/>
            <person name="Tashiro H."/>
            <person name="Tanigami A."/>
            <person name="Fujiwara T."/>
            <person name="Ono T."/>
            <person name="Yamada K."/>
            <person name="Fujii Y."/>
            <person name="Ozaki K."/>
            <person name="Hirao M."/>
            <person name="Ohmori Y."/>
            <person name="Kawabata A."/>
            <person name="Hikiji T."/>
            <person name="Kobatake N."/>
            <person name="Inagaki H."/>
            <person name="Ikema Y."/>
            <person name="Okamoto S."/>
            <person name="Okitani R."/>
            <person name="Kawakami T."/>
            <person name="Noguchi S."/>
            <person name="Itoh T."/>
            <person name="Shigeta K."/>
            <person name="Senba T."/>
            <person name="Matsumura K."/>
            <person name="Nakajima Y."/>
            <person name="Mizuno T."/>
            <person name="Morinaga M."/>
            <person name="Sasaki M."/>
            <person name="Togashi T."/>
            <person name="Oyama M."/>
            <person name="Hata H."/>
            <person name="Watanabe M."/>
            <person name="Komatsu T."/>
            <person name="Mizushima-Sugano J."/>
            <person name="Satoh T."/>
            <person name="Shirai Y."/>
            <person name="Takahashi Y."/>
            <person name="Nakagawa K."/>
            <person name="Okumura K."/>
            <person name="Nagase T."/>
            <person name="Nomura N."/>
            <person name="Kikuchi H."/>
            <person name="Masuho Y."/>
            <person name="Yamashita R."/>
            <person name="Nakai K."/>
            <person name="Yada T."/>
            <person name="Nakamura Y."/>
            <person name="Ohara O."/>
            <person name="Isogai T."/>
            <person name="Sugano S."/>
        </authorList>
    </citation>
    <scope>NUCLEOTIDE SEQUENCE [LARGE SCALE MRNA] (ISOFORM 2)</scope>
    <source>
        <tissue>Smooth muscle</tissue>
    </source>
</reference>
<reference key="4">
    <citation type="journal article" date="2006" name="Nature">
        <title>Human chromosome 11 DNA sequence and analysis including novel gene identification.</title>
        <authorList>
            <person name="Taylor T.D."/>
            <person name="Noguchi H."/>
            <person name="Totoki Y."/>
            <person name="Toyoda A."/>
            <person name="Kuroki Y."/>
            <person name="Dewar K."/>
            <person name="Lloyd C."/>
            <person name="Itoh T."/>
            <person name="Takeda T."/>
            <person name="Kim D.-W."/>
            <person name="She X."/>
            <person name="Barlow K.F."/>
            <person name="Bloom T."/>
            <person name="Bruford E."/>
            <person name="Chang J.L."/>
            <person name="Cuomo C.A."/>
            <person name="Eichler E."/>
            <person name="FitzGerald M.G."/>
            <person name="Jaffe D.B."/>
            <person name="LaButti K."/>
            <person name="Nicol R."/>
            <person name="Park H.-S."/>
            <person name="Seaman C."/>
            <person name="Sougnez C."/>
            <person name="Yang X."/>
            <person name="Zimmer A.R."/>
            <person name="Zody M.C."/>
            <person name="Birren B.W."/>
            <person name="Nusbaum C."/>
            <person name="Fujiyama A."/>
            <person name="Hattori M."/>
            <person name="Rogers J."/>
            <person name="Lander E.S."/>
            <person name="Sakaki Y."/>
        </authorList>
    </citation>
    <scope>NUCLEOTIDE SEQUENCE [LARGE SCALE GENOMIC DNA]</scope>
</reference>
<reference key="5">
    <citation type="submission" date="2005-07" db="EMBL/GenBank/DDBJ databases">
        <authorList>
            <person name="Mural R.J."/>
            <person name="Istrail S."/>
            <person name="Sutton G.G."/>
            <person name="Florea L."/>
            <person name="Halpern A.L."/>
            <person name="Mobarry C.M."/>
            <person name="Lippert R."/>
            <person name="Walenz B."/>
            <person name="Shatkay H."/>
            <person name="Dew I."/>
            <person name="Miller J.R."/>
            <person name="Flanigan M.J."/>
            <person name="Edwards N.J."/>
            <person name="Bolanos R."/>
            <person name="Fasulo D."/>
            <person name="Halldorsson B.V."/>
            <person name="Hannenhalli S."/>
            <person name="Turner R."/>
            <person name="Yooseph S."/>
            <person name="Lu F."/>
            <person name="Nusskern D.R."/>
            <person name="Shue B.C."/>
            <person name="Zheng X.H."/>
            <person name="Zhong F."/>
            <person name="Delcher A.L."/>
            <person name="Huson D.H."/>
            <person name="Kravitz S.A."/>
            <person name="Mouchard L."/>
            <person name="Reinert K."/>
            <person name="Remington K.A."/>
            <person name="Clark A.G."/>
            <person name="Waterman M.S."/>
            <person name="Eichler E.E."/>
            <person name="Adams M.D."/>
            <person name="Hunkapiller M.W."/>
            <person name="Myers E.W."/>
            <person name="Venter J.C."/>
        </authorList>
    </citation>
    <scope>NUCLEOTIDE SEQUENCE [LARGE SCALE GENOMIC DNA]</scope>
</reference>
<reference key="6">
    <citation type="journal article" date="2004" name="Genome Res.">
        <title>The status, quality, and expansion of the NIH full-length cDNA project: the Mammalian Gene Collection (MGC).</title>
        <authorList>
            <consortium name="The MGC Project Team"/>
        </authorList>
    </citation>
    <scope>NUCLEOTIDE SEQUENCE [LARGE SCALE MRNA] (ISOFORM 1)</scope>
    <source>
        <tissue>Kidney</tissue>
        <tissue>Muscle</tissue>
    </source>
</reference>
<reference key="7">
    <citation type="journal article" date="2011" name="Nat. Cell Biol.">
        <title>APC15 drives the turnover of MCC-CDC20 to make the spindle assembly checkpoint responsive to kinetochore attachment.</title>
        <authorList>
            <person name="Mansfeld J."/>
            <person name="Collin P."/>
            <person name="Collins M.O."/>
            <person name="Choudhary J.S."/>
            <person name="Pines J."/>
        </authorList>
    </citation>
    <scope>FUNCTION</scope>
    <scope>IDENTIFICATION IN THE APC/C COMPLEX</scope>
</reference>
<reference key="8">
    <citation type="journal article" date="2017" name="Cell">
        <title>Assembly and function of heterotypic ubiquitin chains in cell-cycle and protein quality control.</title>
        <authorList>
            <person name="Yau R.G."/>
            <person name="Doerner K."/>
            <person name="Castellanos E.R."/>
            <person name="Haakonsen D.L."/>
            <person name="Werner A."/>
            <person name="Wang N."/>
            <person name="Yang X.W."/>
            <person name="Martinez-Martin N."/>
            <person name="Matsumoto M.L."/>
            <person name="Dixit V.M."/>
            <person name="Rape M."/>
        </authorList>
    </citation>
    <scope>FUNCTION</scope>
    <scope>PATHWAY</scope>
</reference>
<reference key="9">
    <citation type="journal article" date="2014" name="Nature">
        <title>Molecular architecture and mechanism of the anaphase-promoting complex.</title>
        <authorList>
            <person name="Chang L."/>
            <person name="Zhang Z."/>
            <person name="Yang J."/>
            <person name="McLaughlin S.H."/>
            <person name="Barford D."/>
        </authorList>
    </citation>
    <scope>STRUCTURE BY ELECTRON MICROSCOPY (7.4 ANGSTROMS) OF THE APC/C</scope>
    <scope>SUBUNIT</scope>
</reference>
<reference evidence="8 9" key="10">
    <citation type="journal article" date="2015" name="Nature">
        <title>Atomic structure of the APC/C and its mechanism of protein ubiquitination.</title>
        <authorList>
            <person name="Chang L."/>
            <person name="Zhang Z."/>
            <person name="Yang J."/>
            <person name="McLaughlin S.H."/>
            <person name="Barford D."/>
        </authorList>
    </citation>
    <scope>STRUCTURE BY ELECTRON MICROSCOPY (3.60 ANGSTROMS) OF APC/C</scope>
    <scope>SUBUNIT</scope>
</reference>